<proteinExistence type="inferred from homology"/>
<name>RT14_BRANA</name>
<gene>
    <name type="primary">RPS14</name>
</gene>
<keyword id="KW-0496">Mitochondrion</keyword>
<keyword id="KW-0687">Ribonucleoprotein</keyword>
<keyword id="KW-0689">Ribosomal protein</keyword>
<evidence type="ECO:0000305" key="1"/>
<sequence>MSEKQNSRDHKRRLLAAKFELRRKLYKAFCKDPDLPSDMRDKHRYKLSKLPRNSSFARVRNRCISTGRPRSVSEFFRIYRIVFRGLASRGSLMGIKKSSW</sequence>
<accession>P49387</accession>
<organism>
    <name type="scientific">Brassica napus</name>
    <name type="common">Rape</name>
    <dbReference type="NCBI Taxonomy" id="3708"/>
    <lineage>
        <taxon>Eukaryota</taxon>
        <taxon>Viridiplantae</taxon>
        <taxon>Streptophyta</taxon>
        <taxon>Embryophyta</taxon>
        <taxon>Tracheophyta</taxon>
        <taxon>Spermatophyta</taxon>
        <taxon>Magnoliopsida</taxon>
        <taxon>eudicotyledons</taxon>
        <taxon>Gunneridae</taxon>
        <taxon>Pentapetalae</taxon>
        <taxon>rosids</taxon>
        <taxon>malvids</taxon>
        <taxon>Brassicales</taxon>
        <taxon>Brassicaceae</taxon>
        <taxon>Brassiceae</taxon>
        <taxon>Brassica</taxon>
    </lineage>
</organism>
<reference key="1">
    <citation type="journal article" date="1993" name="Curr. Genet.">
        <title>Genes for ribosomal proteins S3, L16, L5 and S14 are clustered in the mitochondrial genome of Brassica napus L.</title>
        <authorList>
            <person name="Ye F."/>
            <person name="Bernhardt J."/>
            <person name="Abel W.O."/>
        </authorList>
    </citation>
    <scope>NUCLEOTIDE SEQUENCE [GENOMIC DNA]</scope>
    <source>
        <tissue>Leaf</tissue>
    </source>
</reference>
<dbReference type="EMBL" id="X63653">
    <property type="protein sequence ID" value="CAA45191.1"/>
    <property type="molecule type" value="Genomic_DNA"/>
</dbReference>
<dbReference type="PIR" id="S36916">
    <property type="entry name" value="S36916"/>
</dbReference>
<dbReference type="RefSeq" id="YP_717170.1">
    <property type="nucleotide sequence ID" value="NC_008285.1"/>
</dbReference>
<dbReference type="SMR" id="P49387"/>
<dbReference type="GeneID" id="4237948"/>
<dbReference type="KEGG" id="bna:4237948"/>
<dbReference type="OrthoDB" id="413436at2759"/>
<dbReference type="GO" id="GO:0005739">
    <property type="term" value="C:mitochondrion"/>
    <property type="evidence" value="ECO:0007669"/>
    <property type="project" value="UniProtKB-SubCell"/>
</dbReference>
<dbReference type="GO" id="GO:1990904">
    <property type="term" value="C:ribonucleoprotein complex"/>
    <property type="evidence" value="ECO:0007669"/>
    <property type="project" value="UniProtKB-KW"/>
</dbReference>
<dbReference type="GO" id="GO:0005840">
    <property type="term" value="C:ribosome"/>
    <property type="evidence" value="ECO:0007669"/>
    <property type="project" value="UniProtKB-KW"/>
</dbReference>
<dbReference type="GO" id="GO:0003735">
    <property type="term" value="F:structural constituent of ribosome"/>
    <property type="evidence" value="ECO:0007669"/>
    <property type="project" value="InterPro"/>
</dbReference>
<dbReference type="GO" id="GO:0006412">
    <property type="term" value="P:translation"/>
    <property type="evidence" value="ECO:0007669"/>
    <property type="project" value="InterPro"/>
</dbReference>
<dbReference type="FunFam" id="1.10.287.1480:FF:000001">
    <property type="entry name" value="30S ribosomal protein S14"/>
    <property type="match status" value="1"/>
</dbReference>
<dbReference type="FunFam" id="4.10.830.10:FF:000004">
    <property type="entry name" value="Succinate dehydrogenase [ubiquinone] iron-sulfur subunit, mitochondrial"/>
    <property type="match status" value="1"/>
</dbReference>
<dbReference type="Gene3D" id="1.10.287.1480">
    <property type="match status" value="1"/>
</dbReference>
<dbReference type="InterPro" id="IPR001209">
    <property type="entry name" value="Ribosomal_uS14"/>
</dbReference>
<dbReference type="NCBIfam" id="NF006477">
    <property type="entry name" value="PRK08881.1"/>
    <property type="match status" value="1"/>
</dbReference>
<dbReference type="PANTHER" id="PTHR19836">
    <property type="entry name" value="30S RIBOSOMAL PROTEIN S14"/>
    <property type="match status" value="1"/>
</dbReference>
<dbReference type="PANTHER" id="PTHR19836:SF30">
    <property type="entry name" value="RIBOSOMAL PROTEIN S14"/>
    <property type="match status" value="1"/>
</dbReference>
<dbReference type="Pfam" id="PF00253">
    <property type="entry name" value="Ribosomal_S14"/>
    <property type="match status" value="1"/>
</dbReference>
<dbReference type="SUPFAM" id="SSF57716">
    <property type="entry name" value="Glucocorticoid receptor-like (DNA-binding domain)"/>
    <property type="match status" value="1"/>
</dbReference>
<geneLocation type="mitochondrion"/>
<comment type="subcellular location">
    <subcellularLocation>
        <location>Mitochondrion</location>
    </subcellularLocation>
</comment>
<comment type="similarity">
    <text evidence="1">Belongs to the universal ribosomal protein uS14 family.</text>
</comment>
<feature type="chain" id="PRO_0000131003" description="Small ribosomal subunit protein uS14m">
    <location>
        <begin position="1"/>
        <end position="100"/>
    </location>
</feature>
<protein>
    <recommendedName>
        <fullName evidence="1">Small ribosomal subunit protein uS14m</fullName>
    </recommendedName>
    <alternativeName>
        <fullName>Ribosomal protein S14, mitochondrial</fullName>
    </alternativeName>
</protein>